<dbReference type="EC" id="2.7.1.4"/>
<dbReference type="EMBL" id="D13175">
    <property type="protein sequence ID" value="BAA02467.1"/>
    <property type="molecule type" value="Genomic_DNA"/>
</dbReference>
<dbReference type="EMBL" id="AE014133">
    <property type="protein sequence ID" value="AAN59463.1"/>
    <property type="molecule type" value="Genomic_DNA"/>
</dbReference>
<dbReference type="RefSeq" id="NP_722157.1">
    <property type="nucleotide sequence ID" value="NC_004350.2"/>
</dbReference>
<dbReference type="RefSeq" id="WP_002262656.1">
    <property type="nucleotide sequence ID" value="NC_004350.2"/>
</dbReference>
<dbReference type="SMR" id="Q07211"/>
<dbReference type="STRING" id="210007.SMU_1840"/>
<dbReference type="KEGG" id="smu:SMU_1840"/>
<dbReference type="PATRIC" id="fig|210007.7.peg.1643"/>
<dbReference type="eggNOG" id="COG1940">
    <property type="taxonomic scope" value="Bacteria"/>
</dbReference>
<dbReference type="HOGENOM" id="CLU_036604_3_0_9"/>
<dbReference type="OrthoDB" id="9783435at2"/>
<dbReference type="PhylomeDB" id="Q07211"/>
<dbReference type="Proteomes" id="UP000002512">
    <property type="component" value="Chromosome"/>
</dbReference>
<dbReference type="GO" id="GO:0005524">
    <property type="term" value="F:ATP binding"/>
    <property type="evidence" value="ECO:0007669"/>
    <property type="project" value="UniProtKB-KW"/>
</dbReference>
<dbReference type="GO" id="GO:0008865">
    <property type="term" value="F:fructokinase activity"/>
    <property type="evidence" value="ECO:0007669"/>
    <property type="project" value="UniProtKB-EC"/>
</dbReference>
<dbReference type="GO" id="GO:0046872">
    <property type="term" value="F:metal ion binding"/>
    <property type="evidence" value="ECO:0007669"/>
    <property type="project" value="UniProtKB-KW"/>
</dbReference>
<dbReference type="CDD" id="cd24067">
    <property type="entry name" value="ASKHA_NBD_ROK_BsFRK-like"/>
    <property type="match status" value="1"/>
</dbReference>
<dbReference type="FunFam" id="3.30.420.40:FF:000136">
    <property type="entry name" value="Putative fructokinase"/>
    <property type="match status" value="1"/>
</dbReference>
<dbReference type="FunFam" id="3.30.420.40:FF:000153">
    <property type="entry name" value="Putative fructokinase"/>
    <property type="match status" value="1"/>
</dbReference>
<dbReference type="Gene3D" id="3.30.420.40">
    <property type="match status" value="2"/>
</dbReference>
<dbReference type="InterPro" id="IPR043129">
    <property type="entry name" value="ATPase_NBD"/>
</dbReference>
<dbReference type="InterPro" id="IPR051804">
    <property type="entry name" value="Carb_Metab_Reg_Kinase/Isom"/>
</dbReference>
<dbReference type="InterPro" id="IPR000600">
    <property type="entry name" value="ROK"/>
</dbReference>
<dbReference type="InterPro" id="IPR054618">
    <property type="entry name" value="ScrK"/>
</dbReference>
<dbReference type="NCBIfam" id="NF045550">
    <property type="entry name" value="FrctkaseScrK"/>
    <property type="match status" value="1"/>
</dbReference>
<dbReference type="PANTHER" id="PTHR42742:SF3">
    <property type="entry name" value="FRUCTOKINASE"/>
    <property type="match status" value="1"/>
</dbReference>
<dbReference type="PANTHER" id="PTHR42742">
    <property type="entry name" value="TRANSCRIPTIONAL REPRESSOR MPRA"/>
    <property type="match status" value="1"/>
</dbReference>
<dbReference type="Pfam" id="PF00480">
    <property type="entry name" value="ROK"/>
    <property type="match status" value="1"/>
</dbReference>
<dbReference type="SUPFAM" id="SSF53067">
    <property type="entry name" value="Actin-like ATPase domain"/>
    <property type="match status" value="1"/>
</dbReference>
<accession>Q07211</accession>
<name>SCRK_STRMU</name>
<gene>
    <name type="primary">scrK</name>
    <name type="ordered locus">SMU_1840</name>
</gene>
<evidence type="ECO:0000250" key="1"/>
<evidence type="ECO:0000305" key="2"/>
<keyword id="KW-0067">ATP-binding</keyword>
<keyword id="KW-0119">Carbohydrate metabolism</keyword>
<keyword id="KW-0418">Kinase</keyword>
<keyword id="KW-0460">Magnesium</keyword>
<keyword id="KW-0479">Metal-binding</keyword>
<keyword id="KW-0547">Nucleotide-binding</keyword>
<keyword id="KW-1185">Reference proteome</keyword>
<keyword id="KW-0808">Transferase</keyword>
<keyword id="KW-0862">Zinc</keyword>
<reference key="1">
    <citation type="journal article" date="1993" name="J. Gen. Microbiol.">
        <title>Isolation, characterization and sequence analysis of the scrK gene encoding fructokinase of Streptococcus mutans.</title>
        <authorList>
            <person name="Sato Y."/>
            <person name="Yamamoto Y."/>
            <person name="Kizaki H."/>
            <person name="Kuramitsu H.K."/>
        </authorList>
    </citation>
    <scope>NUCLEOTIDE SEQUENCE [GENOMIC DNA]</scope>
    <source>
        <strain>GS-5</strain>
    </source>
</reference>
<reference key="2">
    <citation type="journal article" date="2002" name="Proc. Natl. Acad. Sci. U.S.A.">
        <title>Genome sequence of Streptococcus mutans UA159, a cariogenic dental pathogen.</title>
        <authorList>
            <person name="Ajdic D.J."/>
            <person name="McShan W.M."/>
            <person name="McLaughlin R.E."/>
            <person name="Savic G."/>
            <person name="Chang J."/>
            <person name="Carson M.B."/>
            <person name="Primeaux C."/>
            <person name="Tian R."/>
            <person name="Kenton S."/>
            <person name="Jia H.G."/>
            <person name="Lin S.P."/>
            <person name="Qian Y."/>
            <person name="Li S."/>
            <person name="Zhu H."/>
            <person name="Najar F.Z."/>
            <person name="Lai H."/>
            <person name="White J."/>
            <person name="Roe B.A."/>
            <person name="Ferretti J.J."/>
        </authorList>
    </citation>
    <scope>NUCLEOTIDE SEQUENCE [LARGE SCALE GENOMIC DNA]</scope>
    <source>
        <strain>ATCC 700610 / UA159</strain>
    </source>
</reference>
<proteinExistence type="inferred from homology"/>
<sequence length="293" mass="31712">MSKLYGSIEAGGTKFVCAVGDENFQILEKVQFPTTTPYETIEKTVAFFKKFEADLASVAIGSFGPIDIDQNSDTYGYITSTPKPNWANVDFVGLISKDFKIPFYFTTDVNSSAYGETIARSNVKSLVYYTIGTGIGAGTIQNGEFIGGMGHTEAGHVYMAPHPNDVHHGFVGTCPFHKGCLEGLAAGPSLEARTGIRGELIEQNSEVWDIQAYYIAQAAIQATVLYRPQVIVFGGGVMAQEHMLNRVREKFTSLLNDYLPVPDVKDYIVTPAVAENGSATLGNLALAKKIAAR</sequence>
<comment type="catalytic activity">
    <reaction>
        <text>D-fructose + ATP = D-fructose 6-phosphate + ADP + H(+)</text>
        <dbReference type="Rhea" id="RHEA:16125"/>
        <dbReference type="ChEBI" id="CHEBI:15378"/>
        <dbReference type="ChEBI" id="CHEBI:30616"/>
        <dbReference type="ChEBI" id="CHEBI:37721"/>
        <dbReference type="ChEBI" id="CHEBI:61527"/>
        <dbReference type="ChEBI" id="CHEBI:456216"/>
        <dbReference type="EC" id="2.7.1.4"/>
    </reaction>
</comment>
<comment type="cofactor">
    <cofactor evidence="1">
        <name>Mg(2+)</name>
        <dbReference type="ChEBI" id="CHEBI:18420"/>
    </cofactor>
</comment>
<comment type="activity regulation">
    <text evidence="2">Inhibition by zinc ions.</text>
</comment>
<comment type="similarity">
    <text evidence="2">Belongs to the ROK (NagC/XylR) family.</text>
</comment>
<organism>
    <name type="scientific">Streptococcus mutans serotype c (strain ATCC 700610 / UA159)</name>
    <dbReference type="NCBI Taxonomy" id="210007"/>
    <lineage>
        <taxon>Bacteria</taxon>
        <taxon>Bacillati</taxon>
        <taxon>Bacillota</taxon>
        <taxon>Bacilli</taxon>
        <taxon>Lactobacillales</taxon>
        <taxon>Streptococcaceae</taxon>
        <taxon>Streptococcus</taxon>
    </lineage>
</organism>
<protein>
    <recommendedName>
        <fullName>Fructokinase</fullName>
        <ecNumber>2.7.1.4</ecNumber>
    </recommendedName>
</protein>
<feature type="chain" id="PRO_0000095686" description="Fructokinase">
    <location>
        <begin position="1"/>
        <end position="293"/>
    </location>
</feature>
<feature type="binding site" evidence="1">
    <location>
        <position position="133"/>
    </location>
    <ligand>
        <name>ATP</name>
        <dbReference type="ChEBI" id="CHEBI:30616"/>
    </ligand>
</feature>
<feature type="binding site" evidence="1">
    <location>
        <position position="156"/>
    </location>
    <ligand>
        <name>Zn(2+)</name>
        <dbReference type="ChEBI" id="CHEBI:29105"/>
    </ligand>
</feature>
<feature type="binding site" evidence="1">
    <location>
        <position position="174"/>
    </location>
    <ligand>
        <name>Zn(2+)</name>
        <dbReference type="ChEBI" id="CHEBI:29105"/>
    </ligand>
</feature>
<feature type="binding site" evidence="1">
    <location>
        <position position="177"/>
    </location>
    <ligand>
        <name>Zn(2+)</name>
        <dbReference type="ChEBI" id="CHEBI:29105"/>
    </ligand>
</feature>
<feature type="binding site" evidence="1">
    <location>
        <position position="180"/>
    </location>
    <ligand>
        <name>Zn(2+)</name>
        <dbReference type="ChEBI" id="CHEBI:29105"/>
    </ligand>
</feature>
<feature type="binding site" evidence="1">
    <location>
        <position position="188"/>
    </location>
    <ligand>
        <name>ATP</name>
        <dbReference type="ChEBI" id="CHEBI:30616"/>
    </ligand>
</feature>
<feature type="binding site" evidence="1">
    <location>
        <begin position="236"/>
        <end position="240"/>
    </location>
    <ligand>
        <name>ATP</name>
        <dbReference type="ChEBI" id="CHEBI:30616"/>
    </ligand>
</feature>
<feature type="sequence conflict" description="In Ref. 1; BAA02467." evidence="2" ref="1">
    <original>T</original>
    <variation>A</variation>
    <location>
        <position position="139"/>
    </location>
</feature>